<evidence type="ECO:0000255" key="1">
    <source>
        <dbReference type="HAMAP-Rule" id="MF_00443"/>
    </source>
</evidence>
<keyword id="KW-0963">Cytoplasm</keyword>
<keyword id="KW-0704">Schiff base</keyword>
<keyword id="KW-0784">Thiamine biosynthesis</keyword>
<keyword id="KW-0808">Transferase</keyword>
<comment type="function">
    <text evidence="1">Catalyzes the rearrangement of 1-deoxy-D-xylulose 5-phosphate (DXP) to produce the thiazole phosphate moiety of thiamine. Sulfur is provided by the thiocarboxylate moiety of the carrier protein ThiS. In vitro, sulfur can be provided by H(2)S.</text>
</comment>
<comment type="catalytic activity">
    <reaction evidence="1">
        <text>[ThiS sulfur-carrier protein]-C-terminal-Gly-aminoethanethioate + 2-iminoacetate + 1-deoxy-D-xylulose 5-phosphate = [ThiS sulfur-carrier protein]-C-terminal Gly-Gly + 2-[(2R,5Z)-2-carboxy-4-methylthiazol-5(2H)-ylidene]ethyl phosphate + 2 H2O + H(+)</text>
        <dbReference type="Rhea" id="RHEA:26297"/>
        <dbReference type="Rhea" id="RHEA-COMP:12909"/>
        <dbReference type="Rhea" id="RHEA-COMP:19908"/>
        <dbReference type="ChEBI" id="CHEBI:15377"/>
        <dbReference type="ChEBI" id="CHEBI:15378"/>
        <dbReference type="ChEBI" id="CHEBI:57792"/>
        <dbReference type="ChEBI" id="CHEBI:62899"/>
        <dbReference type="ChEBI" id="CHEBI:77846"/>
        <dbReference type="ChEBI" id="CHEBI:90778"/>
        <dbReference type="ChEBI" id="CHEBI:232372"/>
        <dbReference type="EC" id="2.8.1.10"/>
    </reaction>
</comment>
<comment type="pathway">
    <text evidence="1">Cofactor biosynthesis; thiamine diphosphate biosynthesis.</text>
</comment>
<comment type="subunit">
    <text evidence="1">Homotetramer. Forms heterodimers with either ThiH or ThiS.</text>
</comment>
<comment type="subcellular location">
    <subcellularLocation>
        <location evidence="1">Cytoplasm</location>
    </subcellularLocation>
</comment>
<comment type="similarity">
    <text evidence="1">Belongs to the ThiG family.</text>
</comment>
<dbReference type="EC" id="2.8.1.10" evidence="1"/>
<dbReference type="EMBL" id="CP000764">
    <property type="protein sequence ID" value="ABS20966.1"/>
    <property type="molecule type" value="Genomic_DNA"/>
</dbReference>
<dbReference type="RefSeq" id="WP_011983722.1">
    <property type="nucleotide sequence ID" value="NC_009674.1"/>
</dbReference>
<dbReference type="SMR" id="A7GLF8"/>
<dbReference type="STRING" id="315749.Bcer98_0619"/>
<dbReference type="GeneID" id="33895998"/>
<dbReference type="KEGG" id="bcy:Bcer98_0619"/>
<dbReference type="eggNOG" id="COG2022">
    <property type="taxonomic scope" value="Bacteria"/>
</dbReference>
<dbReference type="HOGENOM" id="CLU_062233_1_0_9"/>
<dbReference type="OrthoDB" id="9805935at2"/>
<dbReference type="UniPathway" id="UPA00060"/>
<dbReference type="Proteomes" id="UP000002300">
    <property type="component" value="Chromosome"/>
</dbReference>
<dbReference type="GO" id="GO:0005737">
    <property type="term" value="C:cytoplasm"/>
    <property type="evidence" value="ECO:0007669"/>
    <property type="project" value="UniProtKB-SubCell"/>
</dbReference>
<dbReference type="GO" id="GO:1990107">
    <property type="term" value="F:thiazole synthase activity"/>
    <property type="evidence" value="ECO:0007669"/>
    <property type="project" value="UniProtKB-EC"/>
</dbReference>
<dbReference type="GO" id="GO:0009229">
    <property type="term" value="P:thiamine diphosphate biosynthetic process"/>
    <property type="evidence" value="ECO:0007669"/>
    <property type="project" value="UniProtKB-UniRule"/>
</dbReference>
<dbReference type="CDD" id="cd04728">
    <property type="entry name" value="ThiG"/>
    <property type="match status" value="1"/>
</dbReference>
<dbReference type="FunFam" id="3.20.20.70:FF:000049">
    <property type="entry name" value="Thiazole synthase"/>
    <property type="match status" value="1"/>
</dbReference>
<dbReference type="Gene3D" id="3.20.20.70">
    <property type="entry name" value="Aldolase class I"/>
    <property type="match status" value="1"/>
</dbReference>
<dbReference type="HAMAP" id="MF_00443">
    <property type="entry name" value="ThiG"/>
    <property type="match status" value="1"/>
</dbReference>
<dbReference type="InterPro" id="IPR013785">
    <property type="entry name" value="Aldolase_TIM"/>
</dbReference>
<dbReference type="InterPro" id="IPR033983">
    <property type="entry name" value="Thiazole_synthase_ThiG"/>
</dbReference>
<dbReference type="InterPro" id="IPR008867">
    <property type="entry name" value="ThiG"/>
</dbReference>
<dbReference type="PANTHER" id="PTHR34266">
    <property type="entry name" value="THIAZOLE SYNTHASE"/>
    <property type="match status" value="1"/>
</dbReference>
<dbReference type="PANTHER" id="PTHR34266:SF2">
    <property type="entry name" value="THIAZOLE SYNTHASE"/>
    <property type="match status" value="1"/>
</dbReference>
<dbReference type="Pfam" id="PF05690">
    <property type="entry name" value="ThiG"/>
    <property type="match status" value="1"/>
</dbReference>
<dbReference type="SUPFAM" id="SSF110399">
    <property type="entry name" value="ThiG-like"/>
    <property type="match status" value="1"/>
</dbReference>
<name>THIG_BACCN</name>
<sequence length="256" mass="27194">MLNIGPFTFKSRLLLGTGKFSDYDVQRKAIEVSEAEILTFAVRRMDIFDAQQPNLLEKIDIKNYTLLPNTAGAKTAEEAVRIAKLAKASGLCDMVKVEVIGDDKTLLPDPVETLKASEMLLEEGFIVLPYTSDDVVLARKLQELGVHAIMPGASPIGSGLGIVNPLNISFIIEQATVPVIVDAGVGSPADAAFAMELGADGVLLNTAVSGAKDPIKMAEAMKLGIHAGRLGFEAGRIARKRFATASSPLEGMSVVE</sequence>
<protein>
    <recommendedName>
        <fullName evidence="1">Thiazole synthase</fullName>
        <ecNumber evidence="1">2.8.1.10</ecNumber>
    </recommendedName>
</protein>
<proteinExistence type="inferred from homology"/>
<accession>A7GLF8</accession>
<reference key="1">
    <citation type="journal article" date="2008" name="Chem. Biol. Interact.">
        <title>Extending the Bacillus cereus group genomics to putative food-borne pathogens of different toxicity.</title>
        <authorList>
            <person name="Lapidus A."/>
            <person name="Goltsman E."/>
            <person name="Auger S."/>
            <person name="Galleron N."/>
            <person name="Segurens B."/>
            <person name="Dossat C."/>
            <person name="Land M.L."/>
            <person name="Broussolle V."/>
            <person name="Brillard J."/>
            <person name="Guinebretiere M.-H."/>
            <person name="Sanchis V."/>
            <person name="Nguen-the C."/>
            <person name="Lereclus D."/>
            <person name="Richardson P."/>
            <person name="Wincker P."/>
            <person name="Weissenbach J."/>
            <person name="Ehrlich S.D."/>
            <person name="Sorokin A."/>
        </authorList>
    </citation>
    <scope>NUCLEOTIDE SEQUENCE [LARGE SCALE GENOMIC DNA]</scope>
    <source>
        <strain>DSM 22905 / CIP 110041 / 391-98 / NVH 391-98</strain>
    </source>
</reference>
<gene>
    <name evidence="1" type="primary">thiG</name>
    <name type="ordered locus">Bcer98_0619</name>
</gene>
<organism>
    <name type="scientific">Bacillus cytotoxicus (strain DSM 22905 / CIP 110041 / 391-98 / NVH 391-98)</name>
    <dbReference type="NCBI Taxonomy" id="315749"/>
    <lineage>
        <taxon>Bacteria</taxon>
        <taxon>Bacillati</taxon>
        <taxon>Bacillota</taxon>
        <taxon>Bacilli</taxon>
        <taxon>Bacillales</taxon>
        <taxon>Bacillaceae</taxon>
        <taxon>Bacillus</taxon>
        <taxon>Bacillus cereus group</taxon>
    </lineage>
</organism>
<feature type="chain" id="PRO_1000080864" description="Thiazole synthase">
    <location>
        <begin position="1"/>
        <end position="256"/>
    </location>
</feature>
<feature type="active site" description="Schiff-base intermediate with DXP" evidence="1">
    <location>
        <position position="96"/>
    </location>
</feature>
<feature type="binding site" evidence="1">
    <location>
        <position position="157"/>
    </location>
    <ligand>
        <name>1-deoxy-D-xylulose 5-phosphate</name>
        <dbReference type="ChEBI" id="CHEBI:57792"/>
    </ligand>
</feature>
<feature type="binding site" evidence="1">
    <location>
        <begin position="183"/>
        <end position="184"/>
    </location>
    <ligand>
        <name>1-deoxy-D-xylulose 5-phosphate</name>
        <dbReference type="ChEBI" id="CHEBI:57792"/>
    </ligand>
</feature>
<feature type="binding site" evidence="1">
    <location>
        <begin position="205"/>
        <end position="206"/>
    </location>
    <ligand>
        <name>1-deoxy-D-xylulose 5-phosphate</name>
        <dbReference type="ChEBI" id="CHEBI:57792"/>
    </ligand>
</feature>